<dbReference type="EC" id="2.7.11.1" evidence="6"/>
<dbReference type="EMBL" id="BX284603">
    <property type="protein sequence ID" value="CAC70138.1"/>
    <property type="molecule type" value="Genomic_DNA"/>
</dbReference>
<dbReference type="RefSeq" id="NP_499482.1">
    <property type="nucleotide sequence ID" value="NM_067081.4"/>
</dbReference>
<dbReference type="SMR" id="Q95PZ9"/>
<dbReference type="FunCoup" id="Q95PZ9">
    <property type="interactions" value="270"/>
</dbReference>
<dbReference type="STRING" id="6239.Y66D12A.20.1"/>
<dbReference type="PaxDb" id="6239-Y66D12A.20"/>
<dbReference type="EnsemblMetazoa" id="Y66D12A.20.1">
    <property type="protein sequence ID" value="Y66D12A.20.1"/>
    <property type="gene ID" value="WBGene00004960"/>
</dbReference>
<dbReference type="GeneID" id="176582"/>
<dbReference type="KEGG" id="cel:CELE_Y66D12A.20"/>
<dbReference type="AGR" id="WB:WBGene00004960"/>
<dbReference type="CTD" id="176582"/>
<dbReference type="WormBase" id="Y66D12A.20">
    <property type="protein sequence ID" value="CE28799"/>
    <property type="gene ID" value="WBGene00004960"/>
    <property type="gene designation" value="spe-6"/>
</dbReference>
<dbReference type="eggNOG" id="KOG1164">
    <property type="taxonomic scope" value="Eukaryota"/>
</dbReference>
<dbReference type="HOGENOM" id="CLU_019279_2_5_1"/>
<dbReference type="InParanoid" id="Q95PZ9"/>
<dbReference type="OMA" id="ANNFCIG"/>
<dbReference type="OrthoDB" id="5979581at2759"/>
<dbReference type="PhylomeDB" id="Q95PZ9"/>
<dbReference type="PRO" id="PR:Q95PZ9"/>
<dbReference type="Proteomes" id="UP000001940">
    <property type="component" value="Chromosome III"/>
</dbReference>
<dbReference type="Bgee" id="WBGene00004960">
    <property type="expression patterns" value="Expressed in germ line (C elegans) and 3 other cell types or tissues"/>
</dbReference>
<dbReference type="GO" id="GO:0005737">
    <property type="term" value="C:cytoplasm"/>
    <property type="evidence" value="ECO:0000318"/>
    <property type="project" value="GO_Central"/>
</dbReference>
<dbReference type="GO" id="GO:0005634">
    <property type="term" value="C:nucleus"/>
    <property type="evidence" value="ECO:0000318"/>
    <property type="project" value="GO_Central"/>
</dbReference>
<dbReference type="GO" id="GO:0005524">
    <property type="term" value="F:ATP binding"/>
    <property type="evidence" value="ECO:0007669"/>
    <property type="project" value="UniProtKB-KW"/>
</dbReference>
<dbReference type="GO" id="GO:0106310">
    <property type="term" value="F:protein serine kinase activity"/>
    <property type="evidence" value="ECO:0007669"/>
    <property type="project" value="RHEA"/>
</dbReference>
<dbReference type="GO" id="GO:0004674">
    <property type="term" value="F:protein serine/threonine kinase activity"/>
    <property type="evidence" value="ECO:0000318"/>
    <property type="project" value="GO_Central"/>
</dbReference>
<dbReference type="GO" id="GO:0051308">
    <property type="term" value="P:male meiosis chromosome separation"/>
    <property type="evidence" value="ECO:0000315"/>
    <property type="project" value="UniProtKB"/>
</dbReference>
<dbReference type="GO" id="GO:0032880">
    <property type="term" value="P:regulation of protein localization"/>
    <property type="evidence" value="ECO:0000315"/>
    <property type="project" value="UniProtKB"/>
</dbReference>
<dbReference type="GO" id="GO:0007165">
    <property type="term" value="P:signal transduction"/>
    <property type="evidence" value="ECO:0000318"/>
    <property type="project" value="GO_Central"/>
</dbReference>
<dbReference type="GO" id="GO:0048515">
    <property type="term" value="P:spermatid differentiation"/>
    <property type="evidence" value="ECO:0000315"/>
    <property type="project" value="UniProtKB"/>
</dbReference>
<dbReference type="GO" id="GO:0007283">
    <property type="term" value="P:spermatogenesis"/>
    <property type="evidence" value="ECO:0000315"/>
    <property type="project" value="UniProtKB"/>
</dbReference>
<dbReference type="CDD" id="cd14017">
    <property type="entry name" value="STKc_TTBK"/>
    <property type="match status" value="1"/>
</dbReference>
<dbReference type="FunFam" id="1.10.510.10:FF:001336">
    <property type="entry name" value="Serine/threonine-protein kinase spe-6"/>
    <property type="match status" value="1"/>
</dbReference>
<dbReference type="Gene3D" id="1.10.510.10">
    <property type="entry name" value="Transferase(Phosphotransferase) domain 1"/>
    <property type="match status" value="1"/>
</dbReference>
<dbReference type="InterPro" id="IPR050235">
    <property type="entry name" value="CK1_Ser-Thr_kinase"/>
</dbReference>
<dbReference type="InterPro" id="IPR011009">
    <property type="entry name" value="Kinase-like_dom_sf"/>
</dbReference>
<dbReference type="InterPro" id="IPR000719">
    <property type="entry name" value="Prot_kinase_dom"/>
</dbReference>
<dbReference type="InterPro" id="IPR047916">
    <property type="entry name" value="TTBK_Asator-like_STKc"/>
</dbReference>
<dbReference type="PANTHER" id="PTHR11909">
    <property type="entry name" value="CASEIN KINASE-RELATED"/>
    <property type="match status" value="1"/>
</dbReference>
<dbReference type="Pfam" id="PF00069">
    <property type="entry name" value="Pkinase"/>
    <property type="match status" value="1"/>
</dbReference>
<dbReference type="SMART" id="SM00220">
    <property type="entry name" value="S_TKc"/>
    <property type="match status" value="1"/>
</dbReference>
<dbReference type="SUPFAM" id="SSF56112">
    <property type="entry name" value="Protein kinase-like (PK-like)"/>
    <property type="match status" value="1"/>
</dbReference>
<dbReference type="PROSITE" id="PS50011">
    <property type="entry name" value="PROTEIN_KINASE_DOM"/>
    <property type="match status" value="1"/>
</dbReference>
<organism evidence="7">
    <name type="scientific">Caenorhabditis elegans</name>
    <dbReference type="NCBI Taxonomy" id="6239"/>
    <lineage>
        <taxon>Eukaryota</taxon>
        <taxon>Metazoa</taxon>
        <taxon>Ecdysozoa</taxon>
        <taxon>Nematoda</taxon>
        <taxon>Chromadorea</taxon>
        <taxon>Rhabditida</taxon>
        <taxon>Rhabditina</taxon>
        <taxon>Rhabditomorpha</taxon>
        <taxon>Rhabditoidea</taxon>
        <taxon>Rhabditidae</taxon>
        <taxon>Peloderinae</taxon>
        <taxon>Caenorhabditis</taxon>
    </lineage>
</organism>
<evidence type="ECO:0000255" key="1">
    <source>
        <dbReference type="PROSITE-ProRule" id="PRU00159"/>
    </source>
</evidence>
<evidence type="ECO:0000256" key="2">
    <source>
        <dbReference type="SAM" id="MobiDB-lite"/>
    </source>
</evidence>
<evidence type="ECO:0000269" key="3">
    <source>
    </source>
</evidence>
<evidence type="ECO:0000269" key="4">
    <source>
    </source>
</evidence>
<evidence type="ECO:0000269" key="5">
    <source>
    </source>
</evidence>
<evidence type="ECO:0000305" key="6"/>
<evidence type="ECO:0000312" key="7">
    <source>
        <dbReference type="Proteomes" id="UP000001940"/>
    </source>
</evidence>
<evidence type="ECO:0000312" key="8">
    <source>
        <dbReference type="WormBase" id="Y66D12A.20"/>
    </source>
</evidence>
<sequence>MSEQRDSRGMPQAGFIIEHQSSDHKWKVLRNIYSGPFSDVYVVADTVTNEKYAMKCERQEGNSRPVLKLDVMVLMATKGLRGFPNFVAAGRTDVYRYCIMQLVGPDLGRLRRTRPERKFSLPTALQILGQTLRRLEDLHNCGWLCRDVKAPNFCIGVGENESTVYILDFGFARKFVDKEGKIIPPRTAAALMGTFQYCAVSAHSHKDQCARDDLESWFYMGIELLKGPLPWANIDGHKNHKQIGEAKVAIRSEPLRSEFFEGVPKQFNEILTILDQTSYFDRPNYKKLGDLLSQAATEHQVTLKEPLDWQNNERMQQKAIFVGELGESHQASAKLDAKDNANESMDIEFDDMPPKEGISKSLSAEKSCTKNVETARTEK</sequence>
<protein>
    <recommendedName>
        <fullName evidence="6">Serine/threonine-protein kinase spe-6</fullName>
        <ecNumber evidence="6">2.7.11.1</ecNumber>
    </recommendedName>
    <alternativeName>
        <fullName evidence="8">Defective spermatogenesis protein 6</fullName>
    </alternativeName>
</protein>
<accession>Q95PZ9</accession>
<feature type="chain" id="PRO_0000432625" description="Serine/threonine-protein kinase spe-6">
    <location>
        <begin position="1"/>
        <end position="379"/>
    </location>
</feature>
<feature type="domain" description="Protein kinase" evidence="1">
    <location>
        <begin position="26"/>
        <end position="302"/>
    </location>
</feature>
<feature type="region of interest" description="Disordered" evidence="2">
    <location>
        <begin position="331"/>
        <end position="379"/>
    </location>
</feature>
<feature type="compositionally biased region" description="Polar residues" evidence="2">
    <location>
        <begin position="360"/>
        <end position="372"/>
    </location>
</feature>
<feature type="active site" description="Proton acceptor" evidence="1">
    <location>
        <position position="147"/>
    </location>
</feature>
<feature type="binding site" evidence="1">
    <location>
        <begin position="32"/>
        <end position="40"/>
    </location>
    <ligand>
        <name>ATP</name>
        <dbReference type="ChEBI" id="CHEBI:30616"/>
    </ligand>
</feature>
<feature type="binding site" evidence="1">
    <location>
        <position position="55"/>
    </location>
    <ligand>
        <name>ATP</name>
        <dbReference type="ChEBI" id="CHEBI:30616"/>
    </ligand>
</feature>
<feature type="mutagenesis site" description="In hc167; restores fertility in spe-27 mutants by rescuing initiation of spermiogenesis." evidence="3">
    <original>S</original>
    <variation>P</variation>
    <location>
        <position position="34"/>
    </location>
</feature>
<feature type="mutagenesis site" description="In hc163; low fertility affecting males more severely. Mild defect in the initial formation of fibrous bodies-membranous organelles structures in spermatocytes. Precocious initiation of spermiogenesis but with few spermatids maturing into spermatozoa. Restores fertility in spe-8, spe-12, spe-27 or spe-29 mutants by rescuing initiation of spermiogenesis." evidence="3">
    <original>V</original>
    <variation>E</variation>
    <location>
        <position position="71"/>
    </location>
</feature>
<feature type="mutagenesis site" description="In hc163; premature spermatid activation in spermathecae. Premature spermatid activation in spermathecae is suppressed in a zipt-7.1 mutant (ok971) background." evidence="4">
    <original>V</original>
    <variation>E</variation>
    <location>
        <position position="71"/>
    </location>
</feature>
<feature type="mutagenesis site" description="In hc174; restores fertility in spe-27 mutants by rescuing initiation of spermiogenesis." evidence="3">
    <original>G</original>
    <variation>D</variation>
    <location>
        <position position="90"/>
    </location>
</feature>
<feature type="mutagenesis site" description="In hc175; restores fertility in spe-27 mutants by rescuing initiation of spermiogenesis." evidence="3">
    <original>C</original>
    <variation>Y</variation>
    <location>
        <position position="98"/>
    </location>
</feature>
<feature type="mutagenesis site" description="In hc186; restores fertility in spe-27 mutants by rescuing initiation of spermiogenesis." evidence="3">
    <original>D</original>
    <variation>N</variation>
    <location>
        <position position="106"/>
    </location>
</feature>
<feature type="mutagenesis site" description="In hc189; restores fertility in spe-27 mutants by rescuing initiation of spermiogenesis." evidence="3">
    <original>S</original>
    <variation>F</variation>
    <location>
        <position position="120"/>
    </location>
</feature>
<feature type="mutagenesis site" description="In hc164, hc176 and hc187; restores fertility in spe-27 mutants by rescuing initiation of spermiogenesis." evidence="3">
    <original>G</original>
    <variation>E</variation>
    <location>
        <position position="142"/>
    </location>
</feature>
<feature type="mutagenesis site" description="In hc168; restores fertility in spe-27 mutants by rescuing initiation of spermiogenesis." evidence="3">
    <original>L</original>
    <variation>F</variation>
    <location>
        <position position="144"/>
    </location>
</feature>
<feature type="mutagenesis site" description="In hc92 and hc143; sterile. Failure to assemble MSP into fibrous bodies and absence of spermatids due to spermatocytes arresting at the diakinesis stage." evidence="3 5">
    <original>T</original>
    <variation>I</variation>
    <location>
        <position position="194"/>
    </location>
</feature>
<feature type="mutagenesis site" description="In hc173; restores fertility in spe-27 mutants by rescuing initiation of spermiogenesis." evidence="3">
    <original>S</original>
    <variation>F</variation>
    <location>
        <position position="201"/>
    </location>
</feature>
<feature type="mutagenesis site" description="In hc165; restores fertility in spe-27 mutants by rescuing initiation of spermiogenesis." evidence="3">
    <original>R</original>
    <variation>Q</variation>
    <location>
        <position position="211"/>
    </location>
</feature>
<feature type="mutagenesis site" description="In hc188; restores fertility in spe-27 mutants by rescuing initiation of spermiogenesis." evidence="3">
    <original>S</original>
    <variation>N</variation>
    <location>
        <position position="216"/>
    </location>
</feature>
<feature type="mutagenesis site" description="In hc166; restores fertility in spe-27 mutants by rescuing initiation of spermiogenesis." evidence="3">
    <original>R</original>
    <variation>Q</variation>
    <location>
        <position position="256"/>
    </location>
</feature>
<feature type="mutagenesis site" description="In hc169; restores fertility in spe-27 mutants by rescuing initiation of spermiogenesis." evidence="3">
    <original>P</original>
    <variation>S</variation>
    <location>
        <position position="283"/>
    </location>
</feature>
<feature type="mutagenesis site" description="In hc172; restores fertility in spe-27 mutants by rescuing initiation of spermiogenesis." evidence="3">
    <original>A</original>
    <variation>V</variation>
    <location>
        <position position="331"/>
    </location>
</feature>
<feature type="sequence conflict" description="In Ref. 1; no nucleotide entry." evidence="6" ref="1">
    <location>
        <begin position="1"/>
        <end position="9"/>
    </location>
</feature>
<gene>
    <name evidence="8" type="primary">spe-6</name>
    <name evidence="8" type="ORF">Y66D12A.20</name>
</gene>
<keyword id="KW-0067">ATP-binding</keyword>
<keyword id="KW-0221">Differentiation</keyword>
<keyword id="KW-0418">Kinase</keyword>
<keyword id="KW-0547">Nucleotide-binding</keyword>
<keyword id="KW-1185">Reference proteome</keyword>
<keyword id="KW-0723">Serine/threonine-protein kinase</keyword>
<keyword id="KW-0744">Spermatogenesis</keyword>
<keyword id="KW-0808">Transferase</keyword>
<reference evidence="6" key="1">
    <citation type="journal article" date="2002" name="Genetics">
        <title>Spermiogenesis initiation in Caenorhabditis elegans involves a casein kinase 1 encoded by the spe-6 gene.</title>
        <authorList>
            <person name="Muhlrad P.J."/>
            <person name="Ward S."/>
        </authorList>
    </citation>
    <scope>NUCLEOTIDE SEQUENCE [MRNA]</scope>
    <scope>FUNCTION</scope>
    <scope>MUTAGENESIS OF SER-34; VAL-71; GLY-90; CYS-98; ASP-106; SER-120; GLY-142; LEU-144; THR-194; SER-201; ARG-211; SER-216; ARG-256; PRO-283 AND ALA-331</scope>
</reference>
<reference evidence="7" key="2">
    <citation type="journal article" date="1998" name="Science">
        <title>Genome sequence of the nematode C. elegans: a platform for investigating biology.</title>
        <authorList>
            <consortium name="The C. elegans sequencing consortium"/>
        </authorList>
    </citation>
    <scope>NUCLEOTIDE SEQUENCE [LARGE SCALE GENOMIC DNA]</scope>
    <source>
        <strain evidence="7">Bristol N2</strain>
    </source>
</reference>
<reference evidence="6" key="3">
    <citation type="journal article" date="1993" name="Genetics">
        <title>The Caenorhabditis elegans spe-6 gene is required for major sperm protein assembly and shows second site non-complementation with an unlinked deficiency.</title>
        <authorList>
            <person name="Varkey J.P."/>
            <person name="Jansma P.L."/>
            <person name="Minniti A.N."/>
            <person name="Ward S."/>
        </authorList>
    </citation>
    <scope>FUNCTION</scope>
    <scope>MUTAGENESIS OF THR-194</scope>
</reference>
<reference key="4">
    <citation type="journal article" date="2018" name="PLoS Biol.">
        <title>The zinc transporter ZIPT-7.1 regulates sperm activation in nematodes.</title>
        <authorList>
            <person name="Zhao Y."/>
            <person name="Tan C.H."/>
            <person name="Krauchunas A."/>
            <person name="Scharf A."/>
            <person name="Dietrich N."/>
            <person name="Warnhoff K."/>
            <person name="Yuan Z."/>
            <person name="Druzhinina M."/>
            <person name="Gu S.G."/>
            <person name="Miao L."/>
            <person name="Singson A."/>
            <person name="Ellis R.E."/>
            <person name="Kornfeld K."/>
        </authorList>
    </citation>
    <scope>FUNCTION</scope>
    <scope>MUTAGENESIS OF VAL-71</scope>
</reference>
<name>SPE6_CAEEL</name>
<proteinExistence type="evidence at protein level"/>
<comment type="function">
    <text evidence="3 4 5">Serine/threonine-protein kinase which is involved in spermatogenesis (PubMed:12019230, PubMed:29879108, PubMed:8417991). In spermatocytes, regulates meiosis and the localization and assembly of major sperm protein (MSP) into fibrous bodies (PubMed:12019230, PubMed:8417991). In addition, may suppress the initiation of spermiogenesis downstream of spe-8, spe-12, spe-27 and spe-29 (PubMed:12019230).</text>
</comment>
<comment type="catalytic activity">
    <reaction evidence="6">
        <text>L-seryl-[protein] + ATP = O-phospho-L-seryl-[protein] + ADP + H(+)</text>
        <dbReference type="Rhea" id="RHEA:17989"/>
        <dbReference type="Rhea" id="RHEA-COMP:9863"/>
        <dbReference type="Rhea" id="RHEA-COMP:11604"/>
        <dbReference type="ChEBI" id="CHEBI:15378"/>
        <dbReference type="ChEBI" id="CHEBI:29999"/>
        <dbReference type="ChEBI" id="CHEBI:30616"/>
        <dbReference type="ChEBI" id="CHEBI:83421"/>
        <dbReference type="ChEBI" id="CHEBI:456216"/>
        <dbReference type="EC" id="2.7.11.1"/>
    </reaction>
</comment>
<comment type="catalytic activity">
    <reaction evidence="6">
        <text>L-threonyl-[protein] + ATP = O-phospho-L-threonyl-[protein] + ADP + H(+)</text>
        <dbReference type="Rhea" id="RHEA:46608"/>
        <dbReference type="Rhea" id="RHEA-COMP:11060"/>
        <dbReference type="Rhea" id="RHEA-COMP:11605"/>
        <dbReference type="ChEBI" id="CHEBI:15378"/>
        <dbReference type="ChEBI" id="CHEBI:30013"/>
        <dbReference type="ChEBI" id="CHEBI:30616"/>
        <dbReference type="ChEBI" id="CHEBI:61977"/>
        <dbReference type="ChEBI" id="CHEBI:456216"/>
        <dbReference type="EC" id="2.7.11.1"/>
    </reaction>
</comment>
<comment type="similarity">
    <text evidence="6">Belongs to the protein kinase superfamily. CK1 Ser/Thr protein kinase family.</text>
</comment>